<comment type="function">
    <text evidence="1">Together with its co-chaperonin GroES, plays an essential role in assisting protein folding. The GroEL-GroES system forms a nano-cage that allows encapsulation of the non-native substrate proteins and provides a physical environment optimized to promote and accelerate protein folding.</text>
</comment>
<comment type="catalytic activity">
    <reaction evidence="1">
        <text>ATP + H2O + a folded polypeptide = ADP + phosphate + an unfolded polypeptide.</text>
        <dbReference type="EC" id="5.6.1.7"/>
    </reaction>
</comment>
<comment type="subunit">
    <text evidence="1">Forms a cylinder of 14 subunits composed of two heptameric rings stacked back-to-back. Interacts with the co-chaperonin GroES.</text>
</comment>
<comment type="subcellular location">
    <subcellularLocation>
        <location evidence="1">Cytoplasm</location>
    </subcellularLocation>
</comment>
<comment type="similarity">
    <text evidence="1">Belongs to the chaperonin (HSP60) family.</text>
</comment>
<feature type="chain" id="PRO_0000063406" description="Chaperonin GroEL">
    <location>
        <begin position="1"/>
        <end position="548"/>
    </location>
</feature>
<feature type="binding site" evidence="1">
    <location>
        <begin position="29"/>
        <end position="32"/>
    </location>
    <ligand>
        <name>ATP</name>
        <dbReference type="ChEBI" id="CHEBI:30616"/>
    </ligand>
</feature>
<feature type="binding site" evidence="1">
    <location>
        <position position="50"/>
    </location>
    <ligand>
        <name>ATP</name>
        <dbReference type="ChEBI" id="CHEBI:30616"/>
    </ligand>
</feature>
<feature type="binding site" evidence="1">
    <location>
        <begin position="86"/>
        <end position="90"/>
    </location>
    <ligand>
        <name>ATP</name>
        <dbReference type="ChEBI" id="CHEBI:30616"/>
    </ligand>
</feature>
<feature type="binding site" evidence="1">
    <location>
        <position position="414"/>
    </location>
    <ligand>
        <name>ATP</name>
        <dbReference type="ChEBI" id="CHEBI:30616"/>
    </ligand>
</feature>
<feature type="binding site" evidence="1">
    <location>
        <begin position="478"/>
        <end position="480"/>
    </location>
    <ligand>
        <name>ATP</name>
        <dbReference type="ChEBI" id="CHEBI:30616"/>
    </ligand>
</feature>
<feature type="binding site" evidence="1">
    <location>
        <position position="494"/>
    </location>
    <ligand>
        <name>ATP</name>
        <dbReference type="ChEBI" id="CHEBI:30616"/>
    </ligand>
</feature>
<keyword id="KW-0067">ATP-binding</keyword>
<keyword id="KW-0143">Chaperone</keyword>
<keyword id="KW-0963">Cytoplasm</keyword>
<keyword id="KW-0413">Isomerase</keyword>
<keyword id="KW-0547">Nucleotide-binding</keyword>
<organism>
    <name type="scientific">Legionella pneumophila (strain Lens)</name>
    <dbReference type="NCBI Taxonomy" id="297245"/>
    <lineage>
        <taxon>Bacteria</taxon>
        <taxon>Pseudomonadati</taxon>
        <taxon>Pseudomonadota</taxon>
        <taxon>Gammaproteobacteria</taxon>
        <taxon>Legionellales</taxon>
        <taxon>Legionellaceae</taxon>
        <taxon>Legionella</taxon>
    </lineage>
</organism>
<dbReference type="EC" id="5.6.1.7" evidence="1"/>
<dbReference type="EMBL" id="CR628337">
    <property type="protein sequence ID" value="CAH14958.1"/>
    <property type="molecule type" value="Genomic_DNA"/>
</dbReference>
<dbReference type="SMR" id="Q5WYL2"/>
<dbReference type="KEGG" id="lpf:lpl0724"/>
<dbReference type="LegioList" id="lpl0724"/>
<dbReference type="HOGENOM" id="CLU_016503_3_0_6"/>
<dbReference type="Proteomes" id="UP000002517">
    <property type="component" value="Chromosome"/>
</dbReference>
<dbReference type="GO" id="GO:0005737">
    <property type="term" value="C:cytoplasm"/>
    <property type="evidence" value="ECO:0007669"/>
    <property type="project" value="UniProtKB-SubCell"/>
</dbReference>
<dbReference type="GO" id="GO:0005524">
    <property type="term" value="F:ATP binding"/>
    <property type="evidence" value="ECO:0007669"/>
    <property type="project" value="UniProtKB-UniRule"/>
</dbReference>
<dbReference type="GO" id="GO:0140662">
    <property type="term" value="F:ATP-dependent protein folding chaperone"/>
    <property type="evidence" value="ECO:0007669"/>
    <property type="project" value="InterPro"/>
</dbReference>
<dbReference type="GO" id="GO:0016853">
    <property type="term" value="F:isomerase activity"/>
    <property type="evidence" value="ECO:0007669"/>
    <property type="project" value="UniProtKB-KW"/>
</dbReference>
<dbReference type="GO" id="GO:0051082">
    <property type="term" value="F:unfolded protein binding"/>
    <property type="evidence" value="ECO:0007669"/>
    <property type="project" value="UniProtKB-UniRule"/>
</dbReference>
<dbReference type="GO" id="GO:0042026">
    <property type="term" value="P:protein refolding"/>
    <property type="evidence" value="ECO:0007669"/>
    <property type="project" value="UniProtKB-UniRule"/>
</dbReference>
<dbReference type="CDD" id="cd03344">
    <property type="entry name" value="GroEL"/>
    <property type="match status" value="1"/>
</dbReference>
<dbReference type="FunFam" id="1.10.560.10:FF:000001">
    <property type="entry name" value="60 kDa chaperonin"/>
    <property type="match status" value="1"/>
</dbReference>
<dbReference type="FunFam" id="3.50.7.10:FF:000001">
    <property type="entry name" value="60 kDa chaperonin"/>
    <property type="match status" value="1"/>
</dbReference>
<dbReference type="Gene3D" id="3.50.7.10">
    <property type="entry name" value="GroEL"/>
    <property type="match status" value="1"/>
</dbReference>
<dbReference type="Gene3D" id="1.10.560.10">
    <property type="entry name" value="GroEL-like equatorial domain"/>
    <property type="match status" value="1"/>
</dbReference>
<dbReference type="Gene3D" id="3.30.260.10">
    <property type="entry name" value="TCP-1-like chaperonin intermediate domain"/>
    <property type="match status" value="1"/>
</dbReference>
<dbReference type="HAMAP" id="MF_00600">
    <property type="entry name" value="CH60"/>
    <property type="match status" value="1"/>
</dbReference>
<dbReference type="InterPro" id="IPR018370">
    <property type="entry name" value="Chaperonin_Cpn60_CS"/>
</dbReference>
<dbReference type="InterPro" id="IPR001844">
    <property type="entry name" value="Cpn60/GroEL"/>
</dbReference>
<dbReference type="InterPro" id="IPR002423">
    <property type="entry name" value="Cpn60/GroEL/TCP-1"/>
</dbReference>
<dbReference type="InterPro" id="IPR027409">
    <property type="entry name" value="GroEL-like_apical_dom_sf"/>
</dbReference>
<dbReference type="InterPro" id="IPR027413">
    <property type="entry name" value="GROEL-like_equatorial_sf"/>
</dbReference>
<dbReference type="InterPro" id="IPR027410">
    <property type="entry name" value="TCP-1-like_intermed_sf"/>
</dbReference>
<dbReference type="NCBIfam" id="TIGR02348">
    <property type="entry name" value="GroEL"/>
    <property type="match status" value="1"/>
</dbReference>
<dbReference type="NCBIfam" id="NF000592">
    <property type="entry name" value="PRK00013.1"/>
    <property type="match status" value="1"/>
</dbReference>
<dbReference type="NCBIfam" id="NF009487">
    <property type="entry name" value="PRK12849.1"/>
    <property type="match status" value="1"/>
</dbReference>
<dbReference type="NCBIfam" id="NF009488">
    <property type="entry name" value="PRK12850.1"/>
    <property type="match status" value="1"/>
</dbReference>
<dbReference type="NCBIfam" id="NF009489">
    <property type="entry name" value="PRK12851.1"/>
    <property type="match status" value="1"/>
</dbReference>
<dbReference type="PANTHER" id="PTHR45633">
    <property type="entry name" value="60 KDA HEAT SHOCK PROTEIN, MITOCHONDRIAL"/>
    <property type="match status" value="1"/>
</dbReference>
<dbReference type="Pfam" id="PF00118">
    <property type="entry name" value="Cpn60_TCP1"/>
    <property type="match status" value="1"/>
</dbReference>
<dbReference type="PRINTS" id="PR00298">
    <property type="entry name" value="CHAPERONIN60"/>
</dbReference>
<dbReference type="SUPFAM" id="SSF52029">
    <property type="entry name" value="GroEL apical domain-like"/>
    <property type="match status" value="1"/>
</dbReference>
<dbReference type="SUPFAM" id="SSF48592">
    <property type="entry name" value="GroEL equatorial domain-like"/>
    <property type="match status" value="1"/>
</dbReference>
<dbReference type="SUPFAM" id="SSF54849">
    <property type="entry name" value="GroEL-intermediate domain like"/>
    <property type="match status" value="1"/>
</dbReference>
<dbReference type="PROSITE" id="PS00296">
    <property type="entry name" value="CHAPERONINS_CPN60"/>
    <property type="match status" value="1"/>
</dbReference>
<sequence length="548" mass="58165">MAKELRFGDDARLQMLAGVNALADAVQVTMGPRGRNVVLEKSYGAPTVTKDGVSVAKEIEFEHRFMNMGAQMVKEVASKTSDTAGDGTTTATVLARSILVEGHKAVAAGMNPMDLKRGIDKAVLAVTKKLQAMSKPCKDSKAIAQVGTISANSDEAIGAIIAEAMEKVGKEGVITVEDGNGLENELSVVEGMQFDRGYISPYFINNQQNMSCELEHPFILLVDKKVSSIREMLSVLEGVAKSGRPLLIIAEDVEGEALATLVVNNMRGIVKVCAVKAPGFGDRRKAMLQDIAILTKGQVISEEIGKSLEGATLEDLGSAKRIVVTKENTTIIDGEGKATEINARITQIRAQMEETTSDYDREKLQERVAKLAGGVAVIKVGAATEVEMKEKKARVEDALHATRAAVEEGIVAGGGVALIRAQKALDSLKGDNDDQNMGINILRRAIESPMRQIVTNAGYEASVVVNKVAEHKDNYGFNAATGEYGDMVEMGILDPTKVTRMALQNAASVASLMLTTECMVADLPKKEEGVGAGDMGGMGGMGGMGGMM</sequence>
<proteinExistence type="inferred from homology"/>
<reference key="1">
    <citation type="journal article" date="2004" name="Nat. Genet.">
        <title>Evidence in the Legionella pneumophila genome for exploitation of host cell functions and high genome plasticity.</title>
        <authorList>
            <person name="Cazalet C."/>
            <person name="Rusniok C."/>
            <person name="Brueggemann H."/>
            <person name="Zidane N."/>
            <person name="Magnier A."/>
            <person name="Ma L."/>
            <person name="Tichit M."/>
            <person name="Jarraud S."/>
            <person name="Bouchier C."/>
            <person name="Vandenesch F."/>
            <person name="Kunst F."/>
            <person name="Etienne J."/>
            <person name="Glaser P."/>
            <person name="Buchrieser C."/>
        </authorList>
    </citation>
    <scope>NUCLEOTIDE SEQUENCE [LARGE SCALE GENOMIC DNA]</scope>
    <source>
        <strain>Lens</strain>
    </source>
</reference>
<evidence type="ECO:0000255" key="1">
    <source>
        <dbReference type="HAMAP-Rule" id="MF_00600"/>
    </source>
</evidence>
<gene>
    <name evidence="1" type="primary">groEL</name>
    <name evidence="1" type="synonym">groL</name>
    <name type="ordered locus">lpl0724</name>
</gene>
<name>CH60_LEGPL</name>
<protein>
    <recommendedName>
        <fullName evidence="1">Chaperonin GroEL</fullName>
        <ecNumber evidence="1">5.6.1.7</ecNumber>
    </recommendedName>
    <alternativeName>
        <fullName evidence="1">60 kDa chaperonin</fullName>
    </alternativeName>
    <alternativeName>
        <fullName evidence="1">Chaperonin-60</fullName>
        <shortName evidence="1">Cpn60</shortName>
    </alternativeName>
</protein>
<accession>Q5WYL2</accession>